<evidence type="ECO:0000255" key="1"/>
<evidence type="ECO:0000255" key="2">
    <source>
        <dbReference type="HAMAP-Rule" id="MF_01260"/>
    </source>
</evidence>
<protein>
    <recommendedName>
        <fullName evidence="2">Pimeloyl-[acyl-carrier protein] methyl ester esterase</fullName>
        <ecNumber evidence="2">3.1.1.85</ecNumber>
    </recommendedName>
    <alternativeName>
        <fullName evidence="2">Biotin synthesis protein BioH</fullName>
    </alternativeName>
    <alternativeName>
        <fullName evidence="2">Carboxylesterase BioH</fullName>
    </alternativeName>
</protein>
<name>BIOH_SHIBS</name>
<reference key="1">
    <citation type="journal article" date="2005" name="Nucleic Acids Res.">
        <title>Genome dynamics and diversity of Shigella species, the etiologic agents of bacillary dysentery.</title>
        <authorList>
            <person name="Yang F."/>
            <person name="Yang J."/>
            <person name="Zhang X."/>
            <person name="Chen L."/>
            <person name="Jiang Y."/>
            <person name="Yan Y."/>
            <person name="Tang X."/>
            <person name="Wang J."/>
            <person name="Xiong Z."/>
            <person name="Dong J."/>
            <person name="Xue Y."/>
            <person name="Zhu Y."/>
            <person name="Xu X."/>
            <person name="Sun L."/>
            <person name="Chen S."/>
            <person name="Nie H."/>
            <person name="Peng J."/>
            <person name="Xu J."/>
            <person name="Wang Y."/>
            <person name="Yuan Z."/>
            <person name="Wen Y."/>
            <person name="Yao Z."/>
            <person name="Shen Y."/>
            <person name="Qiang B."/>
            <person name="Hou Y."/>
            <person name="Yu J."/>
            <person name="Jin Q."/>
        </authorList>
    </citation>
    <scope>NUCLEOTIDE SEQUENCE [LARGE SCALE GENOMIC DNA]</scope>
    <source>
        <strain>Sb227</strain>
    </source>
</reference>
<accession>Q31VM0</accession>
<organism>
    <name type="scientific">Shigella boydii serotype 4 (strain Sb227)</name>
    <dbReference type="NCBI Taxonomy" id="300268"/>
    <lineage>
        <taxon>Bacteria</taxon>
        <taxon>Pseudomonadati</taxon>
        <taxon>Pseudomonadota</taxon>
        <taxon>Gammaproteobacteria</taxon>
        <taxon>Enterobacterales</taxon>
        <taxon>Enterobacteriaceae</taxon>
        <taxon>Shigella</taxon>
    </lineage>
</organism>
<gene>
    <name evidence="2" type="primary">bioH</name>
    <name type="ordered locus">SBO_3402</name>
</gene>
<feature type="chain" id="PRO_1000067276" description="Pimeloyl-[acyl-carrier protein] methyl ester esterase">
    <location>
        <begin position="1"/>
        <end position="256"/>
    </location>
</feature>
<feature type="domain" description="AB hydrolase-1" evidence="1">
    <location>
        <begin position="15"/>
        <end position="242"/>
    </location>
</feature>
<feature type="active site" description="Nucleophile" evidence="2">
    <location>
        <position position="82"/>
    </location>
</feature>
<feature type="active site" evidence="2">
    <location>
        <position position="207"/>
    </location>
</feature>
<feature type="active site" evidence="2">
    <location>
        <position position="235"/>
    </location>
</feature>
<feature type="binding site" evidence="2">
    <location>
        <position position="22"/>
    </location>
    <ligand>
        <name>substrate</name>
    </ligand>
</feature>
<feature type="binding site" evidence="2">
    <location>
        <begin position="82"/>
        <end position="83"/>
    </location>
    <ligand>
        <name>substrate</name>
    </ligand>
</feature>
<feature type="binding site" evidence="2">
    <location>
        <begin position="143"/>
        <end position="147"/>
    </location>
    <ligand>
        <name>substrate</name>
    </ligand>
</feature>
<feature type="binding site" evidence="2">
    <location>
        <position position="235"/>
    </location>
    <ligand>
        <name>substrate</name>
    </ligand>
</feature>
<proteinExistence type="inferred from homology"/>
<sequence>MNNIWWQTKGQGNVHLVLLHGWGLNAEVWRCIDEELSSHFTLHLVDLPGFGRSQGFGALSLADMAEAVLQQAPDKAIWLGWSLGGLVASQIALTHPERVQALVTVASSPCFSARDDWPGIKPDVLAGFQQQLSDDFQRTVERFLALQTMGTETARQDARALKKTVLALPMPEVDVLNGGLEILKTVDLRQPLQNVPMPFLRLYGYLDGLVPRKVVPMLDKLWPRSKSYIFAKAAHAPFISHPVEFCHLLVALKQRL</sequence>
<comment type="function">
    <text evidence="2">The physiological role of BioH is to remove the methyl group introduced by BioC when the pimeloyl moiety is complete. It allows to synthesize pimeloyl-ACP via the fatty acid synthetic pathway through the hydrolysis of the ester bonds of pimeloyl-ACP esters.</text>
</comment>
<comment type="catalytic activity">
    <reaction evidence="2">
        <text>6-carboxyhexanoyl-[ACP] methyl ester + H2O = 6-carboxyhexanoyl-[ACP] + methanol + H(+)</text>
        <dbReference type="Rhea" id="RHEA:42700"/>
        <dbReference type="Rhea" id="RHEA-COMP:9955"/>
        <dbReference type="Rhea" id="RHEA-COMP:10186"/>
        <dbReference type="ChEBI" id="CHEBI:15377"/>
        <dbReference type="ChEBI" id="CHEBI:15378"/>
        <dbReference type="ChEBI" id="CHEBI:17790"/>
        <dbReference type="ChEBI" id="CHEBI:78846"/>
        <dbReference type="ChEBI" id="CHEBI:82735"/>
        <dbReference type="EC" id="3.1.1.85"/>
    </reaction>
</comment>
<comment type="pathway">
    <text evidence="2">Cofactor biosynthesis; biotin biosynthesis.</text>
</comment>
<comment type="subunit">
    <text evidence="2">Monomer.</text>
</comment>
<comment type="subcellular location">
    <subcellularLocation>
        <location evidence="2">Cytoplasm</location>
    </subcellularLocation>
</comment>
<comment type="similarity">
    <text evidence="2">Belongs to the AB hydrolase superfamily. Carboxylesterase BioH family.</text>
</comment>
<dbReference type="EC" id="3.1.1.85" evidence="2"/>
<dbReference type="EMBL" id="CP000036">
    <property type="protein sequence ID" value="ABB67889.1"/>
    <property type="molecule type" value="Genomic_DNA"/>
</dbReference>
<dbReference type="RefSeq" id="WP_001060055.1">
    <property type="nucleotide sequence ID" value="NC_007613.1"/>
</dbReference>
<dbReference type="SMR" id="Q31VM0"/>
<dbReference type="ESTHER" id="shifl-BIOH">
    <property type="family name" value="BioH"/>
</dbReference>
<dbReference type="KEGG" id="sbo:SBO_3402"/>
<dbReference type="HOGENOM" id="CLU_020336_12_2_6"/>
<dbReference type="UniPathway" id="UPA00078"/>
<dbReference type="Proteomes" id="UP000007067">
    <property type="component" value="Chromosome"/>
</dbReference>
<dbReference type="GO" id="GO:0005737">
    <property type="term" value="C:cytoplasm"/>
    <property type="evidence" value="ECO:0007669"/>
    <property type="project" value="UniProtKB-SubCell"/>
</dbReference>
<dbReference type="GO" id="GO:0090499">
    <property type="term" value="F:pimelyl-[acyl-carrier protein] methyl ester esterase activity"/>
    <property type="evidence" value="ECO:0007669"/>
    <property type="project" value="UniProtKB-EC"/>
</dbReference>
<dbReference type="GO" id="GO:0009102">
    <property type="term" value="P:biotin biosynthetic process"/>
    <property type="evidence" value="ECO:0007669"/>
    <property type="project" value="UniProtKB-UniRule"/>
</dbReference>
<dbReference type="FunFam" id="3.40.50.1820:FF:000045">
    <property type="entry name" value="Pimeloyl-[acyl-carrier protein] methyl ester esterase"/>
    <property type="match status" value="1"/>
</dbReference>
<dbReference type="Gene3D" id="3.40.50.1820">
    <property type="entry name" value="alpha/beta hydrolase"/>
    <property type="match status" value="1"/>
</dbReference>
<dbReference type="HAMAP" id="MF_01260">
    <property type="entry name" value="Carboxylester"/>
    <property type="match status" value="1"/>
</dbReference>
<dbReference type="InterPro" id="IPR000073">
    <property type="entry name" value="AB_hydrolase_1"/>
</dbReference>
<dbReference type="InterPro" id="IPR029058">
    <property type="entry name" value="AB_hydrolase_fold"/>
</dbReference>
<dbReference type="InterPro" id="IPR010076">
    <property type="entry name" value="BioH"/>
</dbReference>
<dbReference type="InterPro" id="IPR050228">
    <property type="entry name" value="Carboxylesterase_BioH"/>
</dbReference>
<dbReference type="NCBIfam" id="TIGR01738">
    <property type="entry name" value="bioH"/>
    <property type="match status" value="1"/>
</dbReference>
<dbReference type="NCBIfam" id="NF007674">
    <property type="entry name" value="PRK10349.1"/>
    <property type="match status" value="1"/>
</dbReference>
<dbReference type="PANTHER" id="PTHR43194">
    <property type="entry name" value="HYDROLASE ALPHA/BETA FOLD FAMILY"/>
    <property type="match status" value="1"/>
</dbReference>
<dbReference type="PANTHER" id="PTHR43194:SF5">
    <property type="entry name" value="PIMELOYL-[ACYL-CARRIER PROTEIN] METHYL ESTER ESTERASE"/>
    <property type="match status" value="1"/>
</dbReference>
<dbReference type="Pfam" id="PF00561">
    <property type="entry name" value="Abhydrolase_1"/>
    <property type="match status" value="1"/>
</dbReference>
<dbReference type="SUPFAM" id="SSF53474">
    <property type="entry name" value="alpha/beta-Hydrolases"/>
    <property type="match status" value="1"/>
</dbReference>
<keyword id="KW-0093">Biotin biosynthesis</keyword>
<keyword id="KW-0963">Cytoplasm</keyword>
<keyword id="KW-0378">Hydrolase</keyword>
<keyword id="KW-0719">Serine esterase</keyword>